<feature type="chain" id="PRO_1000047068" description="Citrate lyase acyl carrier protein">
    <location>
        <begin position="1"/>
        <end position="97"/>
    </location>
</feature>
<feature type="modified residue" description="O-(phosphoribosyl dephospho-coenzyme A)serine" evidence="1">
    <location>
        <position position="14"/>
    </location>
</feature>
<keyword id="KW-0963">Cytoplasm</keyword>
<keyword id="KW-0597">Phosphoprotein</keyword>
<keyword id="KW-1185">Reference proteome</keyword>
<name>CITD_CROS8</name>
<dbReference type="EMBL" id="CP000783">
    <property type="protein sequence ID" value="ABU75620.1"/>
    <property type="molecule type" value="Genomic_DNA"/>
</dbReference>
<dbReference type="RefSeq" id="WP_004388224.1">
    <property type="nucleotide sequence ID" value="NC_009778.1"/>
</dbReference>
<dbReference type="SMR" id="A7MNB3"/>
<dbReference type="GeneID" id="92804868"/>
<dbReference type="KEGG" id="esa:ESA_00321"/>
<dbReference type="HOGENOM" id="CLU_158489_0_0_6"/>
<dbReference type="Proteomes" id="UP000000260">
    <property type="component" value="Chromosome"/>
</dbReference>
<dbReference type="GO" id="GO:0005737">
    <property type="term" value="C:cytoplasm"/>
    <property type="evidence" value="ECO:0007669"/>
    <property type="project" value="UniProtKB-SubCell"/>
</dbReference>
<dbReference type="HAMAP" id="MF_00805">
    <property type="entry name" value="CitD"/>
    <property type="match status" value="1"/>
</dbReference>
<dbReference type="InterPro" id="IPR006495">
    <property type="entry name" value="CitD"/>
</dbReference>
<dbReference type="InterPro" id="IPR023439">
    <property type="entry name" value="Mal_deCO2ase/Cit_lyase_ACP"/>
</dbReference>
<dbReference type="NCBIfam" id="TIGR01608">
    <property type="entry name" value="citD"/>
    <property type="match status" value="1"/>
</dbReference>
<dbReference type="NCBIfam" id="NF009726">
    <property type="entry name" value="PRK13253.1"/>
    <property type="match status" value="1"/>
</dbReference>
<dbReference type="Pfam" id="PF06857">
    <property type="entry name" value="ACP"/>
    <property type="match status" value="1"/>
</dbReference>
<dbReference type="PIRSF" id="PIRSF002736">
    <property type="entry name" value="Citrt_lyas_gamma"/>
    <property type="match status" value="1"/>
</dbReference>
<organism>
    <name type="scientific">Cronobacter sakazakii (strain ATCC BAA-894)</name>
    <name type="common">Enterobacter sakazakii</name>
    <dbReference type="NCBI Taxonomy" id="290339"/>
    <lineage>
        <taxon>Bacteria</taxon>
        <taxon>Pseudomonadati</taxon>
        <taxon>Pseudomonadota</taxon>
        <taxon>Gammaproteobacteria</taxon>
        <taxon>Enterobacterales</taxon>
        <taxon>Enterobacteriaceae</taxon>
        <taxon>Cronobacter</taxon>
    </lineage>
</organism>
<gene>
    <name evidence="1" type="primary">citD</name>
    <name type="ordered locus">ESA_00321</name>
</gene>
<reference key="1">
    <citation type="journal article" date="2010" name="PLoS ONE">
        <title>Genome sequence of Cronobacter sakazakii BAA-894 and comparative genomic hybridization analysis with other Cronobacter species.</title>
        <authorList>
            <person name="Kucerova E."/>
            <person name="Clifton S.W."/>
            <person name="Xia X.Q."/>
            <person name="Long F."/>
            <person name="Porwollik S."/>
            <person name="Fulton L."/>
            <person name="Fronick C."/>
            <person name="Minx P."/>
            <person name="Kyung K."/>
            <person name="Warren W."/>
            <person name="Fulton R."/>
            <person name="Feng D."/>
            <person name="Wollam A."/>
            <person name="Shah N."/>
            <person name="Bhonagiri V."/>
            <person name="Nash W.E."/>
            <person name="Hallsworth-Pepin K."/>
            <person name="Wilson R.K."/>
            <person name="McClelland M."/>
            <person name="Forsythe S.J."/>
        </authorList>
    </citation>
    <scope>NUCLEOTIDE SEQUENCE [LARGE SCALE GENOMIC DNA]</scope>
    <source>
        <strain>ATCC BAA-894</strain>
    </source>
</reference>
<sequence length="97" mass="10688">MKIVKEALAGTAESSDLMVKIAPAAGELEIEIYSDVIKQFGDQIRRVVKETLAAMEVYEGLVIIEDKGALDCVIRARLQSAVLRACEAQPLRWEALK</sequence>
<comment type="function">
    <text evidence="1">Covalent carrier of the coenzyme of citrate lyase.</text>
</comment>
<comment type="subunit">
    <text evidence="1">Oligomer with a subunit composition of (alpha,beta,gamma)6.</text>
</comment>
<comment type="subcellular location">
    <subcellularLocation>
        <location evidence="1">Cytoplasm</location>
    </subcellularLocation>
</comment>
<comment type="similarity">
    <text evidence="1">Belongs to the CitD family.</text>
</comment>
<proteinExistence type="inferred from homology"/>
<accession>A7MNB3</accession>
<evidence type="ECO:0000255" key="1">
    <source>
        <dbReference type="HAMAP-Rule" id="MF_00805"/>
    </source>
</evidence>
<protein>
    <recommendedName>
        <fullName evidence="1">Citrate lyase acyl carrier protein</fullName>
    </recommendedName>
    <alternativeName>
        <fullName evidence="1">Citrate lyase gamma chain</fullName>
    </alternativeName>
</protein>